<protein>
    <recommendedName>
        <fullName evidence="1">Large ribosomal subunit protein uL3</fullName>
    </recommendedName>
    <alternativeName>
        <fullName evidence="2">50S ribosomal protein L3</fullName>
    </alternativeName>
</protein>
<accession>B8FET5</accession>
<gene>
    <name evidence="1" type="primary">rplC</name>
    <name type="ordered locus">Dalk_1915</name>
</gene>
<comment type="function">
    <text evidence="1">One of the primary rRNA binding proteins, it binds directly near the 3'-end of the 23S rRNA, where it nucleates assembly of the 50S subunit.</text>
</comment>
<comment type="subunit">
    <text evidence="1">Part of the 50S ribosomal subunit. Forms a cluster with proteins L14 and L19.</text>
</comment>
<comment type="similarity">
    <text evidence="1">Belongs to the universal ribosomal protein uL3 family.</text>
</comment>
<proteinExistence type="inferred from homology"/>
<dbReference type="EMBL" id="CP001322">
    <property type="protein sequence ID" value="ACL03612.1"/>
    <property type="molecule type" value="Genomic_DNA"/>
</dbReference>
<dbReference type="RefSeq" id="WP_012611043.1">
    <property type="nucleotide sequence ID" value="NC_011768.1"/>
</dbReference>
<dbReference type="SMR" id="B8FET5"/>
<dbReference type="KEGG" id="dal:Dalk_1915"/>
<dbReference type="eggNOG" id="COG0087">
    <property type="taxonomic scope" value="Bacteria"/>
</dbReference>
<dbReference type="HOGENOM" id="CLU_044142_4_1_7"/>
<dbReference type="Proteomes" id="UP000000739">
    <property type="component" value="Chromosome"/>
</dbReference>
<dbReference type="GO" id="GO:0022625">
    <property type="term" value="C:cytosolic large ribosomal subunit"/>
    <property type="evidence" value="ECO:0007669"/>
    <property type="project" value="TreeGrafter"/>
</dbReference>
<dbReference type="GO" id="GO:0019843">
    <property type="term" value="F:rRNA binding"/>
    <property type="evidence" value="ECO:0007669"/>
    <property type="project" value="UniProtKB-UniRule"/>
</dbReference>
<dbReference type="GO" id="GO:0003735">
    <property type="term" value="F:structural constituent of ribosome"/>
    <property type="evidence" value="ECO:0007669"/>
    <property type="project" value="InterPro"/>
</dbReference>
<dbReference type="GO" id="GO:0006412">
    <property type="term" value="P:translation"/>
    <property type="evidence" value="ECO:0007669"/>
    <property type="project" value="UniProtKB-UniRule"/>
</dbReference>
<dbReference type="FunFam" id="2.40.30.10:FF:000004">
    <property type="entry name" value="50S ribosomal protein L3"/>
    <property type="match status" value="1"/>
</dbReference>
<dbReference type="FunFam" id="3.30.160.810:FF:000001">
    <property type="entry name" value="50S ribosomal protein L3"/>
    <property type="match status" value="1"/>
</dbReference>
<dbReference type="Gene3D" id="3.30.160.810">
    <property type="match status" value="1"/>
</dbReference>
<dbReference type="Gene3D" id="2.40.30.10">
    <property type="entry name" value="Translation factors"/>
    <property type="match status" value="1"/>
</dbReference>
<dbReference type="HAMAP" id="MF_01325_B">
    <property type="entry name" value="Ribosomal_uL3_B"/>
    <property type="match status" value="1"/>
</dbReference>
<dbReference type="InterPro" id="IPR000597">
    <property type="entry name" value="Ribosomal_uL3"/>
</dbReference>
<dbReference type="InterPro" id="IPR019927">
    <property type="entry name" value="Ribosomal_uL3_bac/org-type"/>
</dbReference>
<dbReference type="InterPro" id="IPR019926">
    <property type="entry name" value="Ribosomal_uL3_CS"/>
</dbReference>
<dbReference type="InterPro" id="IPR009000">
    <property type="entry name" value="Transl_B-barrel_sf"/>
</dbReference>
<dbReference type="NCBIfam" id="TIGR03625">
    <property type="entry name" value="L3_bact"/>
    <property type="match status" value="1"/>
</dbReference>
<dbReference type="PANTHER" id="PTHR11229">
    <property type="entry name" value="50S RIBOSOMAL PROTEIN L3"/>
    <property type="match status" value="1"/>
</dbReference>
<dbReference type="PANTHER" id="PTHR11229:SF16">
    <property type="entry name" value="LARGE RIBOSOMAL SUBUNIT PROTEIN UL3C"/>
    <property type="match status" value="1"/>
</dbReference>
<dbReference type="Pfam" id="PF00297">
    <property type="entry name" value="Ribosomal_L3"/>
    <property type="match status" value="1"/>
</dbReference>
<dbReference type="SUPFAM" id="SSF50447">
    <property type="entry name" value="Translation proteins"/>
    <property type="match status" value="1"/>
</dbReference>
<dbReference type="PROSITE" id="PS00474">
    <property type="entry name" value="RIBOSOMAL_L3"/>
    <property type="match status" value="1"/>
</dbReference>
<name>RL3_DESAL</name>
<keyword id="KW-1185">Reference proteome</keyword>
<keyword id="KW-0687">Ribonucleoprotein</keyword>
<keyword id="KW-0689">Ribosomal protein</keyword>
<keyword id="KW-0694">RNA-binding</keyword>
<keyword id="KW-0699">rRNA-binding</keyword>
<sequence length="211" mass="22618">MSKGILGKKLGMTGLFSSDGRHIPVTVIEAGPCVVTQIKTKDKDGYNALQLGFGPKKERHTNKPETGHFEKSGGAAYVMVKEFAVDNPEEFELGQSLSTELFAVGEKIDVAGVSKGRGFAGVMKRHGFGGGRMTHGGRCKRRPGSIGCSAWPSKVIKGKKLPGHYGVERKTVRNLEIVDIRADQNLILLKGAVPGAKSGMLELKKLKFGGK</sequence>
<organism>
    <name type="scientific">Desulfatibacillum aliphaticivorans</name>
    <dbReference type="NCBI Taxonomy" id="218208"/>
    <lineage>
        <taxon>Bacteria</taxon>
        <taxon>Pseudomonadati</taxon>
        <taxon>Thermodesulfobacteriota</taxon>
        <taxon>Desulfobacteria</taxon>
        <taxon>Desulfobacterales</taxon>
        <taxon>Desulfatibacillaceae</taxon>
        <taxon>Desulfatibacillum</taxon>
    </lineage>
</organism>
<evidence type="ECO:0000255" key="1">
    <source>
        <dbReference type="HAMAP-Rule" id="MF_01325"/>
    </source>
</evidence>
<evidence type="ECO:0000305" key="2"/>
<reference key="1">
    <citation type="journal article" date="2012" name="Environ. Microbiol.">
        <title>The genome sequence of Desulfatibacillum alkenivorans AK-01: a blueprint for anaerobic alkane oxidation.</title>
        <authorList>
            <person name="Callaghan A.V."/>
            <person name="Morris B.E."/>
            <person name="Pereira I.A."/>
            <person name="McInerney M.J."/>
            <person name="Austin R.N."/>
            <person name="Groves J.T."/>
            <person name="Kukor J.J."/>
            <person name="Suflita J.M."/>
            <person name="Young L.Y."/>
            <person name="Zylstra G.J."/>
            <person name="Wawrik B."/>
        </authorList>
    </citation>
    <scope>NUCLEOTIDE SEQUENCE [LARGE SCALE GENOMIC DNA]</scope>
    <source>
        <strain>AK-01</strain>
    </source>
</reference>
<feature type="chain" id="PRO_1000141855" description="Large ribosomal subunit protein uL3">
    <location>
        <begin position="1"/>
        <end position="211"/>
    </location>
</feature>